<keyword id="KW-0963">Cytoplasm</keyword>
<evidence type="ECO:0000255" key="1">
    <source>
        <dbReference type="HAMAP-Rule" id="MF_00611"/>
    </source>
</evidence>
<comment type="function">
    <text evidence="1">Necessary for formate dehydrogenase activity.</text>
</comment>
<comment type="subcellular location">
    <subcellularLocation>
        <location evidence="1">Cytoplasm</location>
    </subcellularLocation>
</comment>
<comment type="similarity">
    <text evidence="1">Belongs to the FdhE family.</text>
</comment>
<reference key="1">
    <citation type="journal article" date="2011" name="J. Bacteriol.">
        <title>Comparative genomics of 28 Salmonella enterica isolates: evidence for CRISPR-mediated adaptive sublineage evolution.</title>
        <authorList>
            <person name="Fricke W.F."/>
            <person name="Mammel M.K."/>
            <person name="McDermott P.F."/>
            <person name="Tartera C."/>
            <person name="White D.G."/>
            <person name="Leclerc J.E."/>
            <person name="Ravel J."/>
            <person name="Cebula T.A."/>
        </authorList>
    </citation>
    <scope>NUCLEOTIDE SEQUENCE [LARGE SCALE GENOMIC DNA]</scope>
    <source>
        <strain>SL476</strain>
    </source>
</reference>
<name>FDHE_SALHS</name>
<sequence length="309" mass="34706">MSIRIIPQDELGSSEKRTADMIPPLLFPRLKNVYNRRAERLRELAENNPLGDYLRFAALIAHAQEVVLYDHPLEMDLTARIKEANDQGKPPLDIHVLPRDKHWQKLLHSLIAELKPEMSGPALAVIENLEKASEQELEQMASALFASDFASVSSDKAPFIWAALSLYWAQMASLIPGKARAEYGEARQYCPVCGSMPVSSMVQIGTTQGLRYLHCNLCETEWHVVRVKCSNCEQSRDLHYWSLENEQAAVKAESCGDCGTYLKILYQEKDPKVEAVADDLASLVLDARMEQEGFARSSINPFLFPGEGE</sequence>
<feature type="chain" id="PRO_1000130370" description="Protein FdhE">
    <location>
        <begin position="1"/>
        <end position="309"/>
    </location>
</feature>
<proteinExistence type="inferred from homology"/>
<gene>
    <name evidence="1" type="primary">fdhE</name>
    <name type="ordered locus">SeHA_C4360</name>
</gene>
<accession>B4TBW8</accession>
<dbReference type="EMBL" id="CP001120">
    <property type="protein sequence ID" value="ACF67996.1"/>
    <property type="molecule type" value="Genomic_DNA"/>
</dbReference>
<dbReference type="RefSeq" id="WP_000027730.1">
    <property type="nucleotide sequence ID" value="NC_011083.1"/>
</dbReference>
<dbReference type="SMR" id="B4TBW8"/>
<dbReference type="KEGG" id="seh:SeHA_C4360"/>
<dbReference type="HOGENOM" id="CLU_055275_0_0_6"/>
<dbReference type="Proteomes" id="UP000001866">
    <property type="component" value="Chromosome"/>
</dbReference>
<dbReference type="GO" id="GO:0005829">
    <property type="term" value="C:cytosol"/>
    <property type="evidence" value="ECO:0007669"/>
    <property type="project" value="TreeGrafter"/>
</dbReference>
<dbReference type="GO" id="GO:0008199">
    <property type="term" value="F:ferric iron binding"/>
    <property type="evidence" value="ECO:0007669"/>
    <property type="project" value="TreeGrafter"/>
</dbReference>
<dbReference type="GO" id="GO:0051604">
    <property type="term" value="P:protein maturation"/>
    <property type="evidence" value="ECO:0007669"/>
    <property type="project" value="TreeGrafter"/>
</dbReference>
<dbReference type="CDD" id="cd16341">
    <property type="entry name" value="FdhE"/>
    <property type="match status" value="1"/>
</dbReference>
<dbReference type="FunFam" id="3.90.1670.10:FF:000001">
    <property type="entry name" value="Protein FdhE"/>
    <property type="match status" value="1"/>
</dbReference>
<dbReference type="Gene3D" id="3.90.1670.10">
    <property type="entry name" value="FdhE-like domain"/>
    <property type="match status" value="1"/>
</dbReference>
<dbReference type="HAMAP" id="MF_00611">
    <property type="entry name" value="FdeH"/>
    <property type="match status" value="1"/>
</dbReference>
<dbReference type="InterPro" id="IPR024064">
    <property type="entry name" value="FdhE-like_sf"/>
</dbReference>
<dbReference type="InterPro" id="IPR056796">
    <property type="entry name" value="FdhE_C"/>
</dbReference>
<dbReference type="InterPro" id="IPR056797">
    <property type="entry name" value="FdhE_central"/>
</dbReference>
<dbReference type="InterPro" id="IPR056774">
    <property type="entry name" value="FdhE_N"/>
</dbReference>
<dbReference type="InterPro" id="IPR006452">
    <property type="entry name" value="Formate_DH_accessory"/>
</dbReference>
<dbReference type="NCBIfam" id="TIGR01562">
    <property type="entry name" value="FdhE"/>
    <property type="match status" value="1"/>
</dbReference>
<dbReference type="NCBIfam" id="NF002925">
    <property type="entry name" value="PRK03564.1"/>
    <property type="match status" value="1"/>
</dbReference>
<dbReference type="PANTHER" id="PTHR37689">
    <property type="entry name" value="PROTEIN FDHE"/>
    <property type="match status" value="1"/>
</dbReference>
<dbReference type="PANTHER" id="PTHR37689:SF1">
    <property type="entry name" value="PROTEIN FDHE"/>
    <property type="match status" value="1"/>
</dbReference>
<dbReference type="Pfam" id="PF24860">
    <property type="entry name" value="FdhE_C"/>
    <property type="match status" value="1"/>
</dbReference>
<dbReference type="Pfam" id="PF24859">
    <property type="entry name" value="FdhE_central"/>
    <property type="match status" value="1"/>
</dbReference>
<dbReference type="Pfam" id="PF04216">
    <property type="entry name" value="FdhE_N"/>
    <property type="match status" value="1"/>
</dbReference>
<dbReference type="PIRSF" id="PIRSF018296">
    <property type="entry name" value="Format_dh_formtn"/>
    <property type="match status" value="1"/>
</dbReference>
<dbReference type="SUPFAM" id="SSF144020">
    <property type="entry name" value="FdhE-like"/>
    <property type="match status" value="1"/>
</dbReference>
<organism>
    <name type="scientific">Salmonella heidelberg (strain SL476)</name>
    <dbReference type="NCBI Taxonomy" id="454169"/>
    <lineage>
        <taxon>Bacteria</taxon>
        <taxon>Pseudomonadati</taxon>
        <taxon>Pseudomonadota</taxon>
        <taxon>Gammaproteobacteria</taxon>
        <taxon>Enterobacterales</taxon>
        <taxon>Enterobacteriaceae</taxon>
        <taxon>Salmonella</taxon>
    </lineage>
</organism>
<protein>
    <recommendedName>
        <fullName evidence="1">Protein FdhE</fullName>
    </recommendedName>
</protein>